<feature type="chain" id="PRO_1000203776" description="Serine--tRNA ligase">
    <location>
        <begin position="1"/>
        <end position="455"/>
    </location>
</feature>
<feature type="binding site" evidence="1">
    <location>
        <begin position="252"/>
        <end position="254"/>
    </location>
    <ligand>
        <name>L-serine</name>
        <dbReference type="ChEBI" id="CHEBI:33384"/>
    </ligand>
</feature>
<feature type="binding site" evidence="1">
    <location>
        <begin position="283"/>
        <end position="285"/>
    </location>
    <ligand>
        <name>ATP</name>
        <dbReference type="ChEBI" id="CHEBI:30616"/>
    </ligand>
</feature>
<feature type="binding site" evidence="1">
    <location>
        <position position="299"/>
    </location>
    <ligand>
        <name>ATP</name>
        <dbReference type="ChEBI" id="CHEBI:30616"/>
    </ligand>
</feature>
<feature type="binding site" evidence="1">
    <location>
        <position position="306"/>
    </location>
    <ligand>
        <name>L-serine</name>
        <dbReference type="ChEBI" id="CHEBI:33384"/>
    </ligand>
</feature>
<feature type="binding site" evidence="1">
    <location>
        <begin position="370"/>
        <end position="373"/>
    </location>
    <ligand>
        <name>ATP</name>
        <dbReference type="ChEBI" id="CHEBI:30616"/>
    </ligand>
</feature>
<feature type="binding site" evidence="1">
    <location>
        <position position="406"/>
    </location>
    <ligand>
        <name>L-serine</name>
        <dbReference type="ChEBI" id="CHEBI:33384"/>
    </ligand>
</feature>
<gene>
    <name evidence="1" type="primary">serS</name>
    <name type="ordered locus">TGAM_1943</name>
</gene>
<keyword id="KW-0030">Aminoacyl-tRNA synthetase</keyword>
<keyword id="KW-0067">ATP-binding</keyword>
<keyword id="KW-0963">Cytoplasm</keyword>
<keyword id="KW-0436">Ligase</keyword>
<keyword id="KW-0547">Nucleotide-binding</keyword>
<keyword id="KW-0648">Protein biosynthesis</keyword>
<keyword id="KW-1185">Reference proteome</keyword>
<comment type="function">
    <text evidence="1">Catalyzes the attachment of serine to tRNA(Ser). Is also able to aminoacylate tRNA(Sec) with serine, to form the misacylated tRNA L-seryl-tRNA(Sec), which will be further converted into selenocysteinyl-tRNA(Sec).</text>
</comment>
<comment type="catalytic activity">
    <reaction evidence="1">
        <text>tRNA(Ser) + L-serine + ATP = L-seryl-tRNA(Ser) + AMP + diphosphate + H(+)</text>
        <dbReference type="Rhea" id="RHEA:12292"/>
        <dbReference type="Rhea" id="RHEA-COMP:9669"/>
        <dbReference type="Rhea" id="RHEA-COMP:9703"/>
        <dbReference type="ChEBI" id="CHEBI:15378"/>
        <dbReference type="ChEBI" id="CHEBI:30616"/>
        <dbReference type="ChEBI" id="CHEBI:33019"/>
        <dbReference type="ChEBI" id="CHEBI:33384"/>
        <dbReference type="ChEBI" id="CHEBI:78442"/>
        <dbReference type="ChEBI" id="CHEBI:78533"/>
        <dbReference type="ChEBI" id="CHEBI:456215"/>
        <dbReference type="EC" id="6.1.1.11"/>
    </reaction>
</comment>
<comment type="catalytic activity">
    <reaction evidence="1">
        <text>tRNA(Sec) + L-serine + ATP = L-seryl-tRNA(Sec) + AMP + diphosphate + H(+)</text>
        <dbReference type="Rhea" id="RHEA:42580"/>
        <dbReference type="Rhea" id="RHEA-COMP:9742"/>
        <dbReference type="Rhea" id="RHEA-COMP:10128"/>
        <dbReference type="ChEBI" id="CHEBI:15378"/>
        <dbReference type="ChEBI" id="CHEBI:30616"/>
        <dbReference type="ChEBI" id="CHEBI:33019"/>
        <dbReference type="ChEBI" id="CHEBI:33384"/>
        <dbReference type="ChEBI" id="CHEBI:78442"/>
        <dbReference type="ChEBI" id="CHEBI:78533"/>
        <dbReference type="ChEBI" id="CHEBI:456215"/>
        <dbReference type="EC" id="6.1.1.11"/>
    </reaction>
</comment>
<comment type="pathway">
    <text evidence="1">Aminoacyl-tRNA biosynthesis; selenocysteinyl-tRNA(Sec) biosynthesis; L-seryl-tRNA(Sec) from L-serine and tRNA(Sec): step 1/1.</text>
</comment>
<comment type="subunit">
    <text evidence="1">Homodimer. The tRNA molecule binds across the dimer.</text>
</comment>
<comment type="subcellular location">
    <subcellularLocation>
        <location evidence="1">Cytoplasm</location>
    </subcellularLocation>
</comment>
<comment type="domain">
    <text evidence="1">Consists of two distinct domains, a catalytic core and a N-terminal extension that is involved in tRNA binding.</text>
</comment>
<comment type="similarity">
    <text evidence="1">Belongs to the class-II aminoacyl-tRNA synthetase family. Type-1 seryl-tRNA synthetase subfamily.</text>
</comment>
<accession>C5A226</accession>
<protein>
    <recommendedName>
        <fullName evidence="1">Serine--tRNA ligase</fullName>
        <ecNumber evidence="1">6.1.1.11</ecNumber>
    </recommendedName>
    <alternativeName>
        <fullName evidence="1">Seryl-tRNA synthetase</fullName>
        <shortName evidence="1">SerRS</shortName>
    </alternativeName>
    <alternativeName>
        <fullName evidence="1">Seryl-tRNA(Ser/Sec) synthetase</fullName>
    </alternativeName>
</protein>
<proteinExistence type="inferred from homology"/>
<name>SYS_THEGJ</name>
<dbReference type="EC" id="6.1.1.11" evidence="1"/>
<dbReference type="EMBL" id="CP001398">
    <property type="protein sequence ID" value="ACS34445.1"/>
    <property type="molecule type" value="Genomic_DNA"/>
</dbReference>
<dbReference type="RefSeq" id="WP_015859551.1">
    <property type="nucleotide sequence ID" value="NC_012804.1"/>
</dbReference>
<dbReference type="SMR" id="C5A226"/>
<dbReference type="STRING" id="593117.TGAM_1943"/>
<dbReference type="PaxDb" id="593117-TGAM_1943"/>
<dbReference type="GeneID" id="7988347"/>
<dbReference type="KEGG" id="tga:TGAM_1943"/>
<dbReference type="PATRIC" id="fig|593117.10.peg.1953"/>
<dbReference type="eggNOG" id="arCOG00403">
    <property type="taxonomic scope" value="Archaea"/>
</dbReference>
<dbReference type="HOGENOM" id="CLU_023797_0_1_2"/>
<dbReference type="OrthoDB" id="35932at2157"/>
<dbReference type="UniPathway" id="UPA00906">
    <property type="reaction ID" value="UER00895"/>
</dbReference>
<dbReference type="Proteomes" id="UP000001488">
    <property type="component" value="Chromosome"/>
</dbReference>
<dbReference type="GO" id="GO:0005737">
    <property type="term" value="C:cytoplasm"/>
    <property type="evidence" value="ECO:0007669"/>
    <property type="project" value="UniProtKB-SubCell"/>
</dbReference>
<dbReference type="GO" id="GO:0005524">
    <property type="term" value="F:ATP binding"/>
    <property type="evidence" value="ECO:0007669"/>
    <property type="project" value="UniProtKB-UniRule"/>
</dbReference>
<dbReference type="GO" id="GO:0004828">
    <property type="term" value="F:serine-tRNA ligase activity"/>
    <property type="evidence" value="ECO:0007669"/>
    <property type="project" value="UniProtKB-UniRule"/>
</dbReference>
<dbReference type="GO" id="GO:0016260">
    <property type="term" value="P:selenocysteine biosynthetic process"/>
    <property type="evidence" value="ECO:0007669"/>
    <property type="project" value="UniProtKB-UniRule"/>
</dbReference>
<dbReference type="GO" id="GO:0006434">
    <property type="term" value="P:seryl-tRNA aminoacylation"/>
    <property type="evidence" value="ECO:0007669"/>
    <property type="project" value="UniProtKB-UniRule"/>
</dbReference>
<dbReference type="CDD" id="cd00770">
    <property type="entry name" value="SerRS_core"/>
    <property type="match status" value="1"/>
</dbReference>
<dbReference type="FunFam" id="1.10.287.40:FF:000004">
    <property type="entry name" value="Serine--tRNA ligase"/>
    <property type="match status" value="1"/>
</dbReference>
<dbReference type="FunFam" id="3.30.930.10:FF:000048">
    <property type="entry name" value="Serine--tRNA ligase"/>
    <property type="match status" value="1"/>
</dbReference>
<dbReference type="Gene3D" id="3.30.930.10">
    <property type="entry name" value="Bira Bifunctional Protein, Domain 2"/>
    <property type="match status" value="1"/>
</dbReference>
<dbReference type="Gene3D" id="1.10.287.40">
    <property type="entry name" value="Serine-tRNA synthetase, tRNA binding domain"/>
    <property type="match status" value="1"/>
</dbReference>
<dbReference type="HAMAP" id="MF_00176">
    <property type="entry name" value="Ser_tRNA_synth_type1"/>
    <property type="match status" value="1"/>
</dbReference>
<dbReference type="InterPro" id="IPR002314">
    <property type="entry name" value="aa-tRNA-synt_IIb"/>
</dbReference>
<dbReference type="InterPro" id="IPR006195">
    <property type="entry name" value="aa-tRNA-synth_II"/>
</dbReference>
<dbReference type="InterPro" id="IPR045864">
    <property type="entry name" value="aa-tRNA-synth_II/BPL/LPL"/>
</dbReference>
<dbReference type="InterPro" id="IPR002317">
    <property type="entry name" value="Ser-tRNA-ligase_type_1"/>
</dbReference>
<dbReference type="InterPro" id="IPR015866">
    <property type="entry name" value="Ser-tRNA-synth_1_N"/>
</dbReference>
<dbReference type="InterPro" id="IPR042103">
    <property type="entry name" value="SerRS_1_N_sf"/>
</dbReference>
<dbReference type="InterPro" id="IPR033729">
    <property type="entry name" value="SerRS_core"/>
</dbReference>
<dbReference type="InterPro" id="IPR010978">
    <property type="entry name" value="tRNA-bd_arm"/>
</dbReference>
<dbReference type="NCBIfam" id="TIGR00414">
    <property type="entry name" value="serS"/>
    <property type="match status" value="1"/>
</dbReference>
<dbReference type="PANTHER" id="PTHR11778">
    <property type="entry name" value="SERYL-TRNA SYNTHETASE"/>
    <property type="match status" value="1"/>
</dbReference>
<dbReference type="Pfam" id="PF02403">
    <property type="entry name" value="Seryl_tRNA_N"/>
    <property type="match status" value="1"/>
</dbReference>
<dbReference type="Pfam" id="PF00587">
    <property type="entry name" value="tRNA-synt_2b"/>
    <property type="match status" value="1"/>
</dbReference>
<dbReference type="PIRSF" id="PIRSF001529">
    <property type="entry name" value="Ser-tRNA-synth_IIa"/>
    <property type="match status" value="1"/>
</dbReference>
<dbReference type="PRINTS" id="PR00981">
    <property type="entry name" value="TRNASYNTHSER"/>
</dbReference>
<dbReference type="SUPFAM" id="SSF55681">
    <property type="entry name" value="Class II aaRS and biotin synthetases"/>
    <property type="match status" value="1"/>
</dbReference>
<dbReference type="SUPFAM" id="SSF46589">
    <property type="entry name" value="tRNA-binding arm"/>
    <property type="match status" value="1"/>
</dbReference>
<dbReference type="PROSITE" id="PS50862">
    <property type="entry name" value="AA_TRNA_LIGASE_II"/>
    <property type="match status" value="1"/>
</dbReference>
<organism>
    <name type="scientific">Thermococcus gammatolerans (strain DSM 15229 / JCM 11827 / EJ3)</name>
    <dbReference type="NCBI Taxonomy" id="593117"/>
    <lineage>
        <taxon>Archaea</taxon>
        <taxon>Methanobacteriati</taxon>
        <taxon>Methanobacteriota</taxon>
        <taxon>Thermococci</taxon>
        <taxon>Thermococcales</taxon>
        <taxon>Thermococcaceae</taxon>
        <taxon>Thermococcus</taxon>
    </lineage>
</organism>
<evidence type="ECO:0000255" key="1">
    <source>
        <dbReference type="HAMAP-Rule" id="MF_00176"/>
    </source>
</evidence>
<reference key="1">
    <citation type="journal article" date="2007" name="Genome Biol.">
        <title>Genome analysis and genome-wide proteomics of Thermococcus gammatolerans, the most radioresistant organism known amongst the Archaea.</title>
        <authorList>
            <person name="Zivanovic Y."/>
            <person name="Armengaud J."/>
            <person name="Lagorce A."/>
            <person name="Leplat C."/>
            <person name="Guerin P."/>
            <person name="Dutertre M."/>
            <person name="Anthouard V."/>
            <person name="Forterre P."/>
            <person name="Wincker P."/>
            <person name="Confalonieri F."/>
        </authorList>
    </citation>
    <scope>NUCLEOTIDE SEQUENCE [LARGE SCALE GENOMIC DNA]</scope>
    <source>
        <strain>DSM 15229 / JCM 11827 / EJ3</strain>
    </source>
</reference>
<sequence length="455" mass="52987">MLDIKLIREKPELVKKDLIKRGETEKVKWIDEILELDRKWRENLKKINQLRKERNQLAVQIGKRKKAGEPIEDLLARSNEIVKQIEELEKEVEALKKKIDYYLWRLPNITHESVPVGKDDTENVPIRFWGKAKVWEGFLESFKEQSLGKMDYEVLSWRPRLHVDMLELLRGADLERAAKVSGSRFYYLLNELVILDLALIRFALDRLIEKGFTPVIPPYMVRRFVEEGATTFEDFEDVIYKVEGEDLYLIPTAEHPLAGMHANEILDGKDLPLLYVGVSPCFRKEAGTAGKDTKGIFRVHQFHKVEQFVYSRPEESWEWHEKIIANAEELFQELEIPYRVVNICTGDLGYVAAKKYDIEAWMAGQGKFREVVSASNCTDWQARRLNIRFRDKTHEKPKFVHTLNSTAIATSRAIVAILENHQTEEGVVKLPKALWKYTGFKEILPASMKEKCCQD</sequence>